<name>RSXD_ECO7I</name>
<reference key="1">
    <citation type="journal article" date="2009" name="PLoS Genet.">
        <title>Organised genome dynamics in the Escherichia coli species results in highly diverse adaptive paths.</title>
        <authorList>
            <person name="Touchon M."/>
            <person name="Hoede C."/>
            <person name="Tenaillon O."/>
            <person name="Barbe V."/>
            <person name="Baeriswyl S."/>
            <person name="Bidet P."/>
            <person name="Bingen E."/>
            <person name="Bonacorsi S."/>
            <person name="Bouchier C."/>
            <person name="Bouvet O."/>
            <person name="Calteau A."/>
            <person name="Chiapello H."/>
            <person name="Clermont O."/>
            <person name="Cruveiller S."/>
            <person name="Danchin A."/>
            <person name="Diard M."/>
            <person name="Dossat C."/>
            <person name="Karoui M.E."/>
            <person name="Frapy E."/>
            <person name="Garry L."/>
            <person name="Ghigo J.M."/>
            <person name="Gilles A.M."/>
            <person name="Johnson J."/>
            <person name="Le Bouguenec C."/>
            <person name="Lescat M."/>
            <person name="Mangenot S."/>
            <person name="Martinez-Jehanne V."/>
            <person name="Matic I."/>
            <person name="Nassif X."/>
            <person name="Oztas S."/>
            <person name="Petit M.A."/>
            <person name="Pichon C."/>
            <person name="Rouy Z."/>
            <person name="Ruf C.S."/>
            <person name="Schneider D."/>
            <person name="Tourret J."/>
            <person name="Vacherie B."/>
            <person name="Vallenet D."/>
            <person name="Medigue C."/>
            <person name="Rocha E.P.C."/>
            <person name="Denamur E."/>
        </authorList>
    </citation>
    <scope>NUCLEOTIDE SEQUENCE [LARGE SCALE GENOMIC DNA]</scope>
    <source>
        <strain>IAI39 / ExPEC</strain>
    </source>
</reference>
<comment type="function">
    <text evidence="1">Part of a membrane-bound complex that couples electron transfer with translocation of ions across the membrane. Required to maintain the reduced state of SoxR.</text>
</comment>
<comment type="cofactor">
    <cofactor evidence="1">
        <name>FMN</name>
        <dbReference type="ChEBI" id="CHEBI:58210"/>
    </cofactor>
</comment>
<comment type="subunit">
    <text evidence="1">The complex is composed of six subunits: RsxA, RsxB, RsxC, RsxD, RsxE and RsxG.</text>
</comment>
<comment type="subcellular location">
    <subcellularLocation>
        <location evidence="1">Cell inner membrane</location>
        <topology evidence="1">Multi-pass membrane protein</topology>
    </subcellularLocation>
</comment>
<comment type="similarity">
    <text evidence="1">Belongs to the NqrB/RnfD family.</text>
</comment>
<proteinExistence type="inferred from homology"/>
<keyword id="KW-0997">Cell inner membrane</keyword>
<keyword id="KW-1003">Cell membrane</keyword>
<keyword id="KW-0249">Electron transport</keyword>
<keyword id="KW-0285">Flavoprotein</keyword>
<keyword id="KW-0288">FMN</keyword>
<keyword id="KW-0472">Membrane</keyword>
<keyword id="KW-0597">Phosphoprotein</keyword>
<keyword id="KW-1278">Translocase</keyword>
<keyword id="KW-0812">Transmembrane</keyword>
<keyword id="KW-1133">Transmembrane helix</keyword>
<keyword id="KW-0813">Transport</keyword>
<protein>
    <recommendedName>
        <fullName evidence="1">Ion-translocating oxidoreductase complex subunit D</fullName>
        <ecNumber evidence="1">7.-.-.-</ecNumber>
    </recommendedName>
    <alternativeName>
        <fullName evidence="1">Rsx electron transport complex subunit D</fullName>
    </alternativeName>
</protein>
<organism>
    <name type="scientific">Escherichia coli O7:K1 (strain IAI39 / ExPEC)</name>
    <dbReference type="NCBI Taxonomy" id="585057"/>
    <lineage>
        <taxon>Bacteria</taxon>
        <taxon>Pseudomonadati</taxon>
        <taxon>Pseudomonadota</taxon>
        <taxon>Gammaproteobacteria</taxon>
        <taxon>Enterobacterales</taxon>
        <taxon>Enterobacteriaceae</taxon>
        <taxon>Escherichia</taxon>
    </lineage>
</organism>
<sequence length="352" mass="38032">MVFRIASSPYTHNQRQTSRIMLLVLLAAVPGIAAQLCFFGWGTLVQILLASVSALLAEALVLKLRKQSVAATLKDNSALLTGLLLAVSIPPLAPWWMVVLGTVFAVIIAKQLYGGLGQNPFNPAMIGYVVLLISFPVQMTSWLPPHEIAVNIPGFIDAIQVIFSGHTASGGDMNTLRLGIDGISQATPLDTFKTSVRAGHSVEEIMQYPIYSGMLAGAGWQWVNLAWLAGGVWLLWQKAIRWHIPLSFLVTLALCATLGWLFSPDTLAAPQIHLLSGATMLGAFFILTDPVTASTTNRGRLIFGALAGLLVWLIRSFGGYPDGVAFAVLLANITVPLIDYYTRPRVYGHRKG</sequence>
<evidence type="ECO:0000255" key="1">
    <source>
        <dbReference type="HAMAP-Rule" id="MF_00462"/>
    </source>
</evidence>
<gene>
    <name evidence="1" type="primary">rsxD</name>
    <name type="ordered locus">ECIAI39_1426</name>
</gene>
<dbReference type="EC" id="7.-.-.-" evidence="1"/>
<dbReference type="EMBL" id="CU928164">
    <property type="protein sequence ID" value="CAR17559.1"/>
    <property type="molecule type" value="Genomic_DNA"/>
</dbReference>
<dbReference type="RefSeq" id="WP_000231902.1">
    <property type="nucleotide sequence ID" value="NC_011750.1"/>
</dbReference>
<dbReference type="RefSeq" id="YP_002407431.1">
    <property type="nucleotide sequence ID" value="NC_011750.1"/>
</dbReference>
<dbReference type="SMR" id="B7NU03"/>
<dbReference type="STRING" id="585057.ECIAI39_1426"/>
<dbReference type="KEGG" id="ect:ECIAI39_1426"/>
<dbReference type="PATRIC" id="fig|585057.6.peg.1492"/>
<dbReference type="HOGENOM" id="CLU_042020_0_0_6"/>
<dbReference type="Proteomes" id="UP000000749">
    <property type="component" value="Chromosome"/>
</dbReference>
<dbReference type="GO" id="GO:0005886">
    <property type="term" value="C:plasma membrane"/>
    <property type="evidence" value="ECO:0007669"/>
    <property type="project" value="UniProtKB-SubCell"/>
</dbReference>
<dbReference type="GO" id="GO:0022900">
    <property type="term" value="P:electron transport chain"/>
    <property type="evidence" value="ECO:0007669"/>
    <property type="project" value="UniProtKB-UniRule"/>
</dbReference>
<dbReference type="GO" id="GO:0055085">
    <property type="term" value="P:transmembrane transport"/>
    <property type="evidence" value="ECO:0007669"/>
    <property type="project" value="InterPro"/>
</dbReference>
<dbReference type="HAMAP" id="MF_00462">
    <property type="entry name" value="RsxD_RnfD"/>
    <property type="match status" value="1"/>
</dbReference>
<dbReference type="InterPro" id="IPR004338">
    <property type="entry name" value="NqrB/RnfD"/>
</dbReference>
<dbReference type="InterPro" id="IPR011303">
    <property type="entry name" value="RnfD_bac"/>
</dbReference>
<dbReference type="NCBIfam" id="NF002011">
    <property type="entry name" value="PRK00816.1"/>
    <property type="match status" value="1"/>
</dbReference>
<dbReference type="NCBIfam" id="TIGR01946">
    <property type="entry name" value="rnfD"/>
    <property type="match status" value="1"/>
</dbReference>
<dbReference type="PANTHER" id="PTHR30578">
    <property type="entry name" value="ELECTRON TRANSPORT COMPLEX PROTEIN RNFD"/>
    <property type="match status" value="1"/>
</dbReference>
<dbReference type="PANTHER" id="PTHR30578:SF0">
    <property type="entry name" value="ION-TRANSLOCATING OXIDOREDUCTASE COMPLEX SUBUNIT D"/>
    <property type="match status" value="1"/>
</dbReference>
<dbReference type="Pfam" id="PF03116">
    <property type="entry name" value="NQR2_RnfD_RnfE"/>
    <property type="match status" value="1"/>
</dbReference>
<accession>B7NU03</accession>
<feature type="chain" id="PRO_1000191677" description="Ion-translocating oxidoreductase complex subunit D">
    <location>
        <begin position="1"/>
        <end position="352"/>
    </location>
</feature>
<feature type="transmembrane region" description="Helical" evidence="1">
    <location>
        <begin position="20"/>
        <end position="40"/>
    </location>
</feature>
<feature type="transmembrane region" description="Helical" evidence="1">
    <location>
        <begin position="42"/>
        <end position="62"/>
    </location>
</feature>
<feature type="transmembrane region" description="Helical" evidence="1">
    <location>
        <begin position="89"/>
        <end position="109"/>
    </location>
</feature>
<feature type="transmembrane region" description="Helical" evidence="1">
    <location>
        <begin position="123"/>
        <end position="143"/>
    </location>
</feature>
<feature type="transmembrane region" description="Helical" evidence="1">
    <location>
        <begin position="215"/>
        <end position="235"/>
    </location>
</feature>
<feature type="transmembrane region" description="Helical" evidence="1">
    <location>
        <begin position="242"/>
        <end position="262"/>
    </location>
</feature>
<feature type="transmembrane region" description="Helical" evidence="1">
    <location>
        <begin position="267"/>
        <end position="287"/>
    </location>
</feature>
<feature type="transmembrane region" description="Helical" evidence="1">
    <location>
        <begin position="301"/>
        <end position="321"/>
    </location>
</feature>
<feature type="transmembrane region" description="Helical" evidence="1">
    <location>
        <begin position="322"/>
        <end position="342"/>
    </location>
</feature>
<feature type="modified residue" description="FMN phosphoryl threonine" evidence="1">
    <location>
        <position position="187"/>
    </location>
</feature>